<comment type="function">
    <text evidence="1">Binds 23S rRNA and is also seen to make contacts with the A and possibly P site tRNAs.</text>
</comment>
<comment type="subunit">
    <text evidence="1">Part of the 50S ribosomal subunit.</text>
</comment>
<comment type="similarity">
    <text evidence="1">Belongs to the universal ribosomal protein uL16 family.</text>
</comment>
<dbReference type="EMBL" id="AE009951">
    <property type="protein sequence ID" value="AAL93753.1"/>
    <property type="molecule type" value="Genomic_DNA"/>
</dbReference>
<dbReference type="RefSeq" id="NP_602454.1">
    <property type="nucleotide sequence ID" value="NC_003454.1"/>
</dbReference>
<dbReference type="RefSeq" id="WP_005904138.1">
    <property type="nucleotide sequence ID" value="NZ_OZ209243.1"/>
</dbReference>
<dbReference type="SMR" id="Q8RIG2"/>
<dbReference type="FunCoup" id="Q8RIG2">
    <property type="interactions" value="342"/>
</dbReference>
<dbReference type="STRING" id="190304.FN1638"/>
<dbReference type="PaxDb" id="190304-FN1638"/>
<dbReference type="EnsemblBacteria" id="AAL93753">
    <property type="protein sequence ID" value="AAL93753"/>
    <property type="gene ID" value="FN1638"/>
</dbReference>
<dbReference type="GeneID" id="79782576"/>
<dbReference type="KEGG" id="fnu:FN1638"/>
<dbReference type="PATRIC" id="fig|190304.8.peg.131"/>
<dbReference type="eggNOG" id="COG0197">
    <property type="taxonomic scope" value="Bacteria"/>
</dbReference>
<dbReference type="HOGENOM" id="CLU_078858_2_1_0"/>
<dbReference type="InParanoid" id="Q8RIG2"/>
<dbReference type="BioCyc" id="FNUC190304:G1FZS-141-MONOMER"/>
<dbReference type="Proteomes" id="UP000002521">
    <property type="component" value="Chromosome"/>
</dbReference>
<dbReference type="GO" id="GO:0022625">
    <property type="term" value="C:cytosolic large ribosomal subunit"/>
    <property type="evidence" value="ECO:0000318"/>
    <property type="project" value="GO_Central"/>
</dbReference>
<dbReference type="GO" id="GO:0019843">
    <property type="term" value="F:rRNA binding"/>
    <property type="evidence" value="ECO:0000318"/>
    <property type="project" value="GO_Central"/>
</dbReference>
<dbReference type="GO" id="GO:0003735">
    <property type="term" value="F:structural constituent of ribosome"/>
    <property type="evidence" value="ECO:0000318"/>
    <property type="project" value="GO_Central"/>
</dbReference>
<dbReference type="GO" id="GO:0000049">
    <property type="term" value="F:tRNA binding"/>
    <property type="evidence" value="ECO:0007669"/>
    <property type="project" value="UniProtKB-KW"/>
</dbReference>
<dbReference type="GO" id="GO:0006412">
    <property type="term" value="P:translation"/>
    <property type="evidence" value="ECO:0007669"/>
    <property type="project" value="UniProtKB-UniRule"/>
</dbReference>
<dbReference type="CDD" id="cd01433">
    <property type="entry name" value="Ribosomal_L16_L10e"/>
    <property type="match status" value="1"/>
</dbReference>
<dbReference type="FunFam" id="3.90.1170.10:FF:000001">
    <property type="entry name" value="50S ribosomal protein L16"/>
    <property type="match status" value="1"/>
</dbReference>
<dbReference type="Gene3D" id="3.90.1170.10">
    <property type="entry name" value="Ribosomal protein L10e/L16"/>
    <property type="match status" value="1"/>
</dbReference>
<dbReference type="HAMAP" id="MF_01342">
    <property type="entry name" value="Ribosomal_uL16"/>
    <property type="match status" value="1"/>
</dbReference>
<dbReference type="InterPro" id="IPR047873">
    <property type="entry name" value="Ribosomal_uL16"/>
</dbReference>
<dbReference type="InterPro" id="IPR000114">
    <property type="entry name" value="Ribosomal_uL16_bact-type"/>
</dbReference>
<dbReference type="InterPro" id="IPR020798">
    <property type="entry name" value="Ribosomal_uL16_CS"/>
</dbReference>
<dbReference type="InterPro" id="IPR016180">
    <property type="entry name" value="Ribosomal_uL16_dom"/>
</dbReference>
<dbReference type="InterPro" id="IPR036920">
    <property type="entry name" value="Ribosomal_uL16_sf"/>
</dbReference>
<dbReference type="NCBIfam" id="TIGR01164">
    <property type="entry name" value="rplP_bact"/>
    <property type="match status" value="1"/>
</dbReference>
<dbReference type="PANTHER" id="PTHR12220">
    <property type="entry name" value="50S/60S RIBOSOMAL PROTEIN L16"/>
    <property type="match status" value="1"/>
</dbReference>
<dbReference type="PANTHER" id="PTHR12220:SF13">
    <property type="entry name" value="LARGE RIBOSOMAL SUBUNIT PROTEIN UL16M"/>
    <property type="match status" value="1"/>
</dbReference>
<dbReference type="Pfam" id="PF00252">
    <property type="entry name" value="Ribosomal_L16"/>
    <property type="match status" value="1"/>
</dbReference>
<dbReference type="PRINTS" id="PR00060">
    <property type="entry name" value="RIBOSOMALL16"/>
</dbReference>
<dbReference type="SUPFAM" id="SSF54686">
    <property type="entry name" value="Ribosomal protein L16p/L10e"/>
    <property type="match status" value="1"/>
</dbReference>
<dbReference type="PROSITE" id="PS00701">
    <property type="entry name" value="RIBOSOMAL_L16_2"/>
    <property type="match status" value="1"/>
</dbReference>
<feature type="chain" id="PRO_0000062106" description="Large ribosomal subunit protein uL16">
    <location>
        <begin position="1"/>
        <end position="143"/>
    </location>
</feature>
<accession>Q8RIG2</accession>
<gene>
    <name evidence="1" type="primary">rplP</name>
    <name type="ordered locus">FN1638</name>
</gene>
<keyword id="KW-1185">Reference proteome</keyword>
<keyword id="KW-0687">Ribonucleoprotein</keyword>
<keyword id="KW-0689">Ribosomal protein</keyword>
<keyword id="KW-0694">RNA-binding</keyword>
<keyword id="KW-0699">rRNA-binding</keyword>
<keyword id="KW-0820">tRNA-binding</keyword>
<reference key="1">
    <citation type="journal article" date="2002" name="J. Bacteriol.">
        <title>Genome sequence and analysis of the oral bacterium Fusobacterium nucleatum strain ATCC 25586.</title>
        <authorList>
            <person name="Kapatral V."/>
            <person name="Anderson I."/>
            <person name="Ivanova N."/>
            <person name="Reznik G."/>
            <person name="Los T."/>
            <person name="Lykidis A."/>
            <person name="Bhattacharyya A."/>
            <person name="Bartman A."/>
            <person name="Gardner W."/>
            <person name="Grechkin G."/>
            <person name="Zhu L."/>
            <person name="Vasieva O."/>
            <person name="Chu L."/>
            <person name="Kogan Y."/>
            <person name="Chaga O."/>
            <person name="Goltsman E."/>
            <person name="Bernal A."/>
            <person name="Larsen N."/>
            <person name="D'Souza M."/>
            <person name="Walunas T."/>
            <person name="Pusch G."/>
            <person name="Haselkorn R."/>
            <person name="Fonstein M."/>
            <person name="Kyrpides N.C."/>
            <person name="Overbeek R."/>
        </authorList>
    </citation>
    <scope>NUCLEOTIDE SEQUENCE [LARGE SCALE GENOMIC DNA]</scope>
    <source>
        <strain>ATCC 25586 / DSM 15643 / BCRC 10681 / CIP 101130 / JCM 8532 / KCTC 2640 / LMG 13131 / VPI 4355</strain>
    </source>
</reference>
<name>RL16_FUSNN</name>
<organism>
    <name type="scientific">Fusobacterium nucleatum subsp. nucleatum (strain ATCC 25586 / DSM 15643 / BCRC 10681 / CIP 101130 / JCM 8532 / KCTC 2640 / LMG 13131 / VPI 4355)</name>
    <dbReference type="NCBI Taxonomy" id="190304"/>
    <lineage>
        <taxon>Bacteria</taxon>
        <taxon>Fusobacteriati</taxon>
        <taxon>Fusobacteriota</taxon>
        <taxon>Fusobacteriia</taxon>
        <taxon>Fusobacteriales</taxon>
        <taxon>Fusobacteriaceae</taxon>
        <taxon>Fusobacterium</taxon>
    </lineage>
</organism>
<evidence type="ECO:0000255" key="1">
    <source>
        <dbReference type="HAMAP-Rule" id="MF_01342"/>
    </source>
</evidence>
<evidence type="ECO:0000305" key="2"/>
<sequence>MLMPKRTKHRKMFRGRMKGAAHKGNFVAFGDYGLQALEPSWITNRQIESCRVAINRTFKREGKTYIRIFPDKPITARPAGVRMGKGKGNVEGWVSVVRPGRILFEVSGVTEEKAAAALRKAAMKLPIRCKVVKREEKENGGEN</sequence>
<protein>
    <recommendedName>
        <fullName evidence="1">Large ribosomal subunit protein uL16</fullName>
    </recommendedName>
    <alternativeName>
        <fullName evidence="2">50S ribosomal protein L16</fullName>
    </alternativeName>
</protein>
<proteinExistence type="inferred from homology"/>